<name>YDEP_ECOLI</name>
<gene>
    <name type="primary">ydeP</name>
    <name type="ordered locus">b1501</name>
    <name type="ordered locus">JW1495</name>
</gene>
<feature type="chain" id="PRO_0000063227" description="Protein YdeP">
    <location>
        <begin position="1"/>
        <end position="759"/>
    </location>
</feature>
<feature type="binding site" evidence="1">
    <location>
        <position position="49"/>
    </location>
    <ligand>
        <name>[4Fe-4S] cluster</name>
        <dbReference type="ChEBI" id="CHEBI:49883"/>
    </ligand>
</feature>
<feature type="binding site" evidence="1">
    <location>
        <position position="52"/>
    </location>
    <ligand>
        <name>[4Fe-4S] cluster</name>
        <dbReference type="ChEBI" id="CHEBI:49883"/>
    </ligand>
</feature>
<comment type="function">
    <text evidence="2 3">Probably involved in acid resistance.</text>
</comment>
<comment type="cofactor">
    <cofactor evidence="4">
        <name>[4Fe-4S] cluster</name>
        <dbReference type="ChEBI" id="CHEBI:49883"/>
    </cofactor>
    <text evidence="4">Binds 1 [4Fe-4S] cluster.</text>
</comment>
<comment type="cofactor">
    <cofactor evidence="1">
        <name>Mo-bis(molybdopterin guanine dinucleotide)</name>
        <dbReference type="ChEBI" id="CHEBI:60539"/>
    </cofactor>
    <text evidence="1">Binds 1 molybdenum-bis(molybdopterin guanine dinucleotide) (Mo-bis-MGD) cofactor per subunit.</text>
</comment>
<comment type="induction">
    <text evidence="2 3">By EvgA.</text>
</comment>
<comment type="similarity">
    <text evidence="4">Belongs to the prokaryotic molybdopterin-containing oxidoreductase family.</text>
</comment>
<dbReference type="EMBL" id="U00096">
    <property type="protein sequence ID" value="AAC74574.1"/>
    <property type="molecule type" value="Genomic_DNA"/>
</dbReference>
<dbReference type="EMBL" id="AP009048">
    <property type="protein sequence ID" value="BAA15174.1"/>
    <property type="molecule type" value="Genomic_DNA"/>
</dbReference>
<dbReference type="PIR" id="H64903">
    <property type="entry name" value="H64903"/>
</dbReference>
<dbReference type="RefSeq" id="NP_416018.1">
    <property type="nucleotide sequence ID" value="NC_000913.3"/>
</dbReference>
<dbReference type="RefSeq" id="WP_000726691.1">
    <property type="nucleotide sequence ID" value="NZ_SSZK01000001.1"/>
</dbReference>
<dbReference type="SMR" id="P77561"/>
<dbReference type="BioGRID" id="4260213">
    <property type="interactions" value="17"/>
</dbReference>
<dbReference type="BioGRID" id="850416">
    <property type="interactions" value="1"/>
</dbReference>
<dbReference type="DIP" id="DIP-28057N"/>
<dbReference type="FunCoup" id="P77561">
    <property type="interactions" value="95"/>
</dbReference>
<dbReference type="IntAct" id="P77561">
    <property type="interactions" value="11"/>
</dbReference>
<dbReference type="STRING" id="511145.b1501"/>
<dbReference type="PaxDb" id="511145-b1501"/>
<dbReference type="EnsemblBacteria" id="AAC74574">
    <property type="protein sequence ID" value="AAC74574"/>
    <property type="gene ID" value="b1501"/>
</dbReference>
<dbReference type="GeneID" id="946055"/>
<dbReference type="KEGG" id="ecj:JW1495"/>
<dbReference type="KEGG" id="eco:b1501"/>
<dbReference type="KEGG" id="ecoc:C3026_08690"/>
<dbReference type="PATRIC" id="fig|1411691.4.peg.765"/>
<dbReference type="EchoBASE" id="EB3559"/>
<dbReference type="eggNOG" id="COG0243">
    <property type="taxonomic scope" value="Bacteria"/>
</dbReference>
<dbReference type="HOGENOM" id="CLU_000422_16_1_6"/>
<dbReference type="InParanoid" id="P77561"/>
<dbReference type="OMA" id="TFNPVRE"/>
<dbReference type="OrthoDB" id="5287431at2"/>
<dbReference type="PhylomeDB" id="P77561"/>
<dbReference type="BioCyc" id="EcoCyc:G6791-MONOMER"/>
<dbReference type="PRO" id="PR:P77561"/>
<dbReference type="Proteomes" id="UP000000625">
    <property type="component" value="Chromosome"/>
</dbReference>
<dbReference type="GO" id="GO:0016020">
    <property type="term" value="C:membrane"/>
    <property type="evidence" value="ECO:0000318"/>
    <property type="project" value="GO_Central"/>
</dbReference>
<dbReference type="GO" id="GO:0051539">
    <property type="term" value="F:4 iron, 4 sulfur cluster binding"/>
    <property type="evidence" value="ECO:0007669"/>
    <property type="project" value="UniProtKB-KW"/>
</dbReference>
<dbReference type="GO" id="GO:0008863">
    <property type="term" value="F:formate dehydrogenase (NAD+) activity"/>
    <property type="evidence" value="ECO:0007669"/>
    <property type="project" value="InterPro"/>
</dbReference>
<dbReference type="GO" id="GO:0030151">
    <property type="term" value="F:molybdenum ion binding"/>
    <property type="evidence" value="ECO:0007669"/>
    <property type="project" value="InterPro"/>
</dbReference>
<dbReference type="GO" id="GO:0010447">
    <property type="term" value="P:response to acidic pH"/>
    <property type="evidence" value="ECO:0000315"/>
    <property type="project" value="EcoCyc"/>
</dbReference>
<dbReference type="CDD" id="cd02787">
    <property type="entry name" value="MopB_CT_ydeP"/>
    <property type="match status" value="1"/>
</dbReference>
<dbReference type="CDD" id="cd02767">
    <property type="entry name" value="MopB_ydeP"/>
    <property type="match status" value="1"/>
</dbReference>
<dbReference type="Gene3D" id="3.40.50.740">
    <property type="match status" value="1"/>
</dbReference>
<dbReference type="Gene3D" id="3.40.228.10">
    <property type="entry name" value="Dimethylsulfoxide Reductase, domain 2"/>
    <property type="match status" value="1"/>
</dbReference>
<dbReference type="InterPro" id="IPR009010">
    <property type="entry name" value="Asp_de-COase-like_dom_sf"/>
</dbReference>
<dbReference type="InterPro" id="IPR037951">
    <property type="entry name" value="MopB_CT_YdeP"/>
</dbReference>
<dbReference type="InterPro" id="IPR006656">
    <property type="entry name" value="Mopterin_OxRdtase"/>
</dbReference>
<dbReference type="InterPro" id="IPR010046">
    <property type="entry name" value="Mopterin_OxRdtse_a_bac"/>
</dbReference>
<dbReference type="InterPro" id="IPR050123">
    <property type="entry name" value="Prok_molybdopt-oxidoreductase"/>
</dbReference>
<dbReference type="InterPro" id="IPR041953">
    <property type="entry name" value="YdeP_MopB"/>
</dbReference>
<dbReference type="NCBIfam" id="TIGR01701">
    <property type="entry name" value="Fdhalpha-like"/>
    <property type="match status" value="1"/>
</dbReference>
<dbReference type="NCBIfam" id="NF007406">
    <property type="entry name" value="PRK09939.1"/>
    <property type="match status" value="1"/>
</dbReference>
<dbReference type="PANTHER" id="PTHR43105:SF4">
    <property type="entry name" value="PROTEIN YDEP"/>
    <property type="match status" value="1"/>
</dbReference>
<dbReference type="PANTHER" id="PTHR43105">
    <property type="entry name" value="RESPIRATORY NITRATE REDUCTASE"/>
    <property type="match status" value="1"/>
</dbReference>
<dbReference type="Pfam" id="PF00384">
    <property type="entry name" value="Molybdopterin"/>
    <property type="match status" value="1"/>
</dbReference>
<dbReference type="PIRSF" id="PIRSF000144">
    <property type="entry name" value="CbbBc"/>
    <property type="match status" value="1"/>
</dbReference>
<dbReference type="SUPFAM" id="SSF50692">
    <property type="entry name" value="ADC-like"/>
    <property type="match status" value="1"/>
</dbReference>
<dbReference type="SUPFAM" id="SSF53706">
    <property type="entry name" value="Formate dehydrogenase/DMSO reductase, domains 1-3"/>
    <property type="match status" value="1"/>
</dbReference>
<evidence type="ECO:0000250" key="1"/>
<evidence type="ECO:0000269" key="2">
    <source>
    </source>
</evidence>
<evidence type="ECO:0000269" key="3">
    <source>
    </source>
</evidence>
<evidence type="ECO:0000305" key="4"/>
<reference key="1">
    <citation type="journal article" date="1996" name="DNA Res.">
        <title>A 570-kb DNA sequence of the Escherichia coli K-12 genome corresponding to the 28.0-40.1 min region on the linkage map.</title>
        <authorList>
            <person name="Aiba H."/>
            <person name="Baba T."/>
            <person name="Fujita K."/>
            <person name="Hayashi K."/>
            <person name="Inada T."/>
            <person name="Isono K."/>
            <person name="Itoh T."/>
            <person name="Kasai H."/>
            <person name="Kashimoto K."/>
            <person name="Kimura S."/>
            <person name="Kitakawa M."/>
            <person name="Kitagawa M."/>
            <person name="Makino K."/>
            <person name="Miki T."/>
            <person name="Mizobuchi K."/>
            <person name="Mori H."/>
            <person name="Mori T."/>
            <person name="Motomura K."/>
            <person name="Nakade S."/>
            <person name="Nakamura Y."/>
            <person name="Nashimoto H."/>
            <person name="Nishio Y."/>
            <person name="Oshima T."/>
            <person name="Saito N."/>
            <person name="Sampei G."/>
            <person name="Seki Y."/>
            <person name="Sivasundaram S."/>
            <person name="Tagami H."/>
            <person name="Takeda J."/>
            <person name="Takemoto K."/>
            <person name="Takeuchi Y."/>
            <person name="Wada C."/>
            <person name="Yamamoto Y."/>
            <person name="Horiuchi T."/>
        </authorList>
    </citation>
    <scope>NUCLEOTIDE SEQUENCE [LARGE SCALE GENOMIC DNA]</scope>
    <source>
        <strain>K12 / W3110 / ATCC 27325 / DSM 5911</strain>
    </source>
</reference>
<reference key="2">
    <citation type="journal article" date="1997" name="Science">
        <title>The complete genome sequence of Escherichia coli K-12.</title>
        <authorList>
            <person name="Blattner F.R."/>
            <person name="Plunkett G. III"/>
            <person name="Bloch C.A."/>
            <person name="Perna N.T."/>
            <person name="Burland V."/>
            <person name="Riley M."/>
            <person name="Collado-Vides J."/>
            <person name="Glasner J.D."/>
            <person name="Rode C.K."/>
            <person name="Mayhew G.F."/>
            <person name="Gregor J."/>
            <person name="Davis N.W."/>
            <person name="Kirkpatrick H.A."/>
            <person name="Goeden M.A."/>
            <person name="Rose D.J."/>
            <person name="Mau B."/>
            <person name="Shao Y."/>
        </authorList>
    </citation>
    <scope>NUCLEOTIDE SEQUENCE [LARGE SCALE GENOMIC DNA]</scope>
    <source>
        <strain>K12 / MG1655 / ATCC 47076</strain>
    </source>
</reference>
<reference key="3">
    <citation type="journal article" date="2006" name="Mol. Syst. Biol.">
        <title>Highly accurate genome sequences of Escherichia coli K-12 strains MG1655 and W3110.</title>
        <authorList>
            <person name="Hayashi K."/>
            <person name="Morooka N."/>
            <person name="Yamamoto Y."/>
            <person name="Fujita K."/>
            <person name="Isono K."/>
            <person name="Choi S."/>
            <person name="Ohtsubo E."/>
            <person name="Baba T."/>
            <person name="Wanner B.L."/>
            <person name="Mori H."/>
            <person name="Horiuchi T."/>
        </authorList>
    </citation>
    <scope>NUCLEOTIDE SEQUENCE [LARGE SCALE GENOMIC DNA]</scope>
    <source>
        <strain>K12 / W3110 / ATCC 27325 / DSM 5911</strain>
    </source>
</reference>
<reference key="4">
    <citation type="journal article" date="2002" name="J. Bacteriol.">
        <title>Escherichia coli gene expression responsive to levels of the response regulator EvgA.</title>
        <authorList>
            <person name="Masuda N."/>
            <person name="Church G.M."/>
        </authorList>
    </citation>
    <scope>FUNCTION</scope>
    <scope>INDUCTION</scope>
    <source>
        <strain>K12 / MG1655 / ATCC 47076</strain>
    </source>
</reference>
<reference key="5">
    <citation type="journal article" date="2003" name="Mol. Microbiol.">
        <title>Regulatory network of acid resistance genes in Escherichia coli.</title>
        <authorList>
            <person name="Masuda N."/>
            <person name="Church G.M."/>
        </authorList>
    </citation>
    <scope>FUNCTION</scope>
    <scope>INDUCTION</scope>
    <source>
        <strain>K12 / MG1655 / ATCC 47076</strain>
    </source>
</reference>
<sequence>MKKKIESYQGAAGGWGAVKSVANAVRKQMDIRQDVIAMFDMNKPEGFDCPGCAWPDPKHSASFDICENGAKAIAWEVTDKQVNASFFAENTVQSLLTWGDHELEAAGRLTQPLKYDAVSDCYKPLSWQQAFDEIGARLQSYSDPNQVEFYTSGRTSNEAAFLYQLFAREYGSNNFPDCSNMCHEPTSVGLAASIGVGKGTVLLEDFEKCDLVICIGHNPGTNHPRMLTSLRALVKRGAKMIAINPLQERGLERFTAPQNPFEMLTNSETQLASAYYNVRIGGDMALLKGMMRLLIERDDAASAAGRPSLLDDEFIQTHTVGFDELRRDVLNSEWKDIERISGLSQTQIAELADAYAAAERTIICYGMGITQHEHGTQNVQQLVNLLLMKGNIGKPGAGICPLRGHSNVQGDRTVGITEKPSAEFLARLGERYGFTPPHAPGHAAIASMQAICTGQARALICMGGNFALAMPDREASAVPLTQLDLAVHVATKLNRSHLLTARHSYILPVLGRSEIDMQKNGAQAVTVEDSMSMIHASRGVLKPAGVMLKSECAVVAGIAQAALPQSVVAWEYLVEDYDRIRNDIEAVLPEFADYNQRIRHPGGFHLINAAAERRWMTPSGKANFITSKGLLEDPSSAFNSKLVMATVRSHDQYNTTIYGMDDRYRGVFGQRDVVFMSAKQAKICRVKNGERVNLIALTPDGKRSSRRMDRLKVVIYPMADRSLVTYFPESNHMLTLDNHDPLSGIPGYKSIPVELEPSN</sequence>
<organism>
    <name type="scientific">Escherichia coli (strain K12)</name>
    <dbReference type="NCBI Taxonomy" id="83333"/>
    <lineage>
        <taxon>Bacteria</taxon>
        <taxon>Pseudomonadati</taxon>
        <taxon>Pseudomonadota</taxon>
        <taxon>Gammaproteobacteria</taxon>
        <taxon>Enterobacterales</taxon>
        <taxon>Enterobacteriaceae</taxon>
        <taxon>Escherichia</taxon>
    </lineage>
</organism>
<protein>
    <recommendedName>
        <fullName>Protein YdeP</fullName>
    </recommendedName>
</protein>
<keyword id="KW-0004">4Fe-4S</keyword>
<keyword id="KW-0408">Iron</keyword>
<keyword id="KW-0411">Iron-sulfur</keyword>
<keyword id="KW-0479">Metal-binding</keyword>
<keyword id="KW-0500">Molybdenum</keyword>
<keyword id="KW-0560">Oxidoreductase</keyword>
<keyword id="KW-1185">Reference proteome</keyword>
<accession>P77561</accession>
<accession>P78160</accession>
<proteinExistence type="evidence at transcript level"/>